<dbReference type="EC" id="2.6.1.83" evidence="2"/>
<dbReference type="EMBL" id="BX950229">
    <property type="protein sequence ID" value="CAF31083.1"/>
    <property type="molecule type" value="Genomic_DNA"/>
</dbReference>
<dbReference type="RefSeq" id="WP_011171471.1">
    <property type="nucleotide sequence ID" value="NC_005791.1"/>
</dbReference>
<dbReference type="SMR" id="Q6LX26"/>
<dbReference type="STRING" id="267377.MMP1527"/>
<dbReference type="EnsemblBacteria" id="CAF31083">
    <property type="protein sequence ID" value="CAF31083"/>
    <property type="gene ID" value="MMP1527"/>
</dbReference>
<dbReference type="KEGG" id="mmp:MMP1527"/>
<dbReference type="PATRIC" id="fig|267377.15.peg.1564"/>
<dbReference type="eggNOG" id="arCOG01133">
    <property type="taxonomic scope" value="Archaea"/>
</dbReference>
<dbReference type="HOGENOM" id="CLU_017584_4_5_2"/>
<dbReference type="OrthoDB" id="372018at2157"/>
<dbReference type="UniPathway" id="UPA00034">
    <property type="reaction ID" value="UER00466"/>
</dbReference>
<dbReference type="Proteomes" id="UP000000590">
    <property type="component" value="Chromosome"/>
</dbReference>
<dbReference type="GO" id="GO:0005737">
    <property type="term" value="C:cytoplasm"/>
    <property type="evidence" value="ECO:0007669"/>
    <property type="project" value="UniProtKB-SubCell"/>
</dbReference>
<dbReference type="GO" id="GO:0010285">
    <property type="term" value="F:L,L-diaminopimelate aminotransferase activity"/>
    <property type="evidence" value="ECO:0000314"/>
    <property type="project" value="UniProtKB"/>
</dbReference>
<dbReference type="GO" id="GO:0030170">
    <property type="term" value="F:pyridoxal phosphate binding"/>
    <property type="evidence" value="ECO:0000250"/>
    <property type="project" value="UniProtKB"/>
</dbReference>
<dbReference type="GO" id="GO:0033362">
    <property type="term" value="P:lysine biosynthetic process via diaminopimelate, diaminopimelate-aminotransferase pathway"/>
    <property type="evidence" value="ECO:0000314"/>
    <property type="project" value="UniProtKB"/>
</dbReference>
<dbReference type="CDD" id="cd00609">
    <property type="entry name" value="AAT_like"/>
    <property type="match status" value="1"/>
</dbReference>
<dbReference type="FunFam" id="3.40.640.10:FF:000210">
    <property type="entry name" value="Aminotransferase"/>
    <property type="match status" value="1"/>
</dbReference>
<dbReference type="Gene3D" id="3.90.1150.10">
    <property type="entry name" value="Aspartate Aminotransferase, domain 1"/>
    <property type="match status" value="1"/>
</dbReference>
<dbReference type="Gene3D" id="3.40.640.10">
    <property type="entry name" value="Type I PLP-dependent aspartate aminotransferase-like (Major domain)"/>
    <property type="match status" value="1"/>
</dbReference>
<dbReference type="InterPro" id="IPR004839">
    <property type="entry name" value="Aminotransferase_I/II_large"/>
</dbReference>
<dbReference type="InterPro" id="IPR050881">
    <property type="entry name" value="LL-DAP_aminotransferase"/>
</dbReference>
<dbReference type="InterPro" id="IPR004838">
    <property type="entry name" value="NHTrfase_class1_PyrdxlP-BS"/>
</dbReference>
<dbReference type="InterPro" id="IPR015424">
    <property type="entry name" value="PyrdxlP-dep_Trfase"/>
</dbReference>
<dbReference type="InterPro" id="IPR015421">
    <property type="entry name" value="PyrdxlP-dep_Trfase_major"/>
</dbReference>
<dbReference type="InterPro" id="IPR015422">
    <property type="entry name" value="PyrdxlP-dep_Trfase_small"/>
</dbReference>
<dbReference type="NCBIfam" id="NF004937">
    <property type="entry name" value="PRK06290.1"/>
    <property type="match status" value="1"/>
</dbReference>
<dbReference type="PANTHER" id="PTHR42832">
    <property type="entry name" value="AMINO ACID AMINOTRANSFERASE"/>
    <property type="match status" value="1"/>
</dbReference>
<dbReference type="PANTHER" id="PTHR42832:SF3">
    <property type="entry name" value="L-GLUTAMINE--4-(METHYLSULFANYL)-2-OXOBUTANOATE AMINOTRANSFERASE"/>
    <property type="match status" value="1"/>
</dbReference>
<dbReference type="Pfam" id="PF00155">
    <property type="entry name" value="Aminotran_1_2"/>
    <property type="match status" value="1"/>
</dbReference>
<dbReference type="SUPFAM" id="SSF53383">
    <property type="entry name" value="PLP-dependent transferases"/>
    <property type="match status" value="1"/>
</dbReference>
<dbReference type="PROSITE" id="PS00105">
    <property type="entry name" value="AA_TRANSFER_CLASS_1"/>
    <property type="match status" value="1"/>
</dbReference>
<proteinExistence type="evidence at protein level"/>
<feature type="chain" id="PRO_0000342259" description="LL-diaminopimelate aminotransferase">
    <location>
        <begin position="1"/>
        <end position="416"/>
    </location>
</feature>
<feature type="binding site" evidence="1">
    <location>
        <position position="25"/>
    </location>
    <ligand>
        <name>substrate</name>
    </ligand>
</feature>
<feature type="binding site" evidence="1">
    <location>
        <position position="52"/>
    </location>
    <ligand>
        <name>substrate</name>
    </ligand>
</feature>
<feature type="binding site" evidence="1">
    <location>
        <position position="78"/>
    </location>
    <ligand>
        <name>pyridoxal 5'-phosphate</name>
        <dbReference type="ChEBI" id="CHEBI:597326"/>
    </ligand>
</feature>
<feature type="binding site" evidence="1">
    <location>
        <begin position="115"/>
        <end position="116"/>
    </location>
    <ligand>
        <name>pyridoxal 5'-phosphate</name>
        <dbReference type="ChEBI" id="CHEBI:597326"/>
    </ligand>
</feature>
<feature type="binding site" evidence="1">
    <location>
        <position position="116"/>
    </location>
    <ligand>
        <name>substrate</name>
    </ligand>
</feature>
<feature type="binding site" evidence="1">
    <location>
        <position position="140"/>
    </location>
    <ligand>
        <name>pyridoxal 5'-phosphate</name>
        <dbReference type="ChEBI" id="CHEBI:597326"/>
    </ligand>
</feature>
<feature type="binding site" evidence="1">
    <location>
        <position position="140"/>
    </location>
    <ligand>
        <name>substrate</name>
    </ligand>
</feature>
<feature type="binding site" evidence="1">
    <location>
        <position position="190"/>
    </location>
    <ligand>
        <name>pyridoxal 5'-phosphate</name>
        <dbReference type="ChEBI" id="CHEBI:597326"/>
    </ligand>
</feature>
<feature type="binding site" evidence="1">
    <location>
        <position position="190"/>
    </location>
    <ligand>
        <name>substrate</name>
    </ligand>
</feature>
<feature type="binding site" evidence="1">
    <location>
        <position position="221"/>
    </location>
    <ligand>
        <name>pyridoxal 5'-phosphate</name>
        <dbReference type="ChEBI" id="CHEBI:597326"/>
    </ligand>
</feature>
<feature type="binding site" evidence="1">
    <location>
        <begin position="248"/>
        <end position="250"/>
    </location>
    <ligand>
        <name>pyridoxal 5'-phosphate</name>
        <dbReference type="ChEBI" id="CHEBI:597326"/>
    </ligand>
</feature>
<feature type="binding site" evidence="1">
    <location>
        <position position="259"/>
    </location>
    <ligand>
        <name>pyridoxal 5'-phosphate</name>
        <dbReference type="ChEBI" id="CHEBI:597326"/>
    </ligand>
</feature>
<feature type="modified residue" description="N6-(pyridoxal phosphate)lysine" evidence="1">
    <location>
        <position position="251"/>
    </location>
</feature>
<reference key="1">
    <citation type="journal article" date="2004" name="J. Bacteriol.">
        <title>Complete genome sequence of the genetically tractable hydrogenotrophic methanogen Methanococcus maripaludis.</title>
        <authorList>
            <person name="Hendrickson E.L."/>
            <person name="Kaul R."/>
            <person name="Zhou Y."/>
            <person name="Bovee D."/>
            <person name="Chapman P."/>
            <person name="Chung J."/>
            <person name="Conway de Macario E."/>
            <person name="Dodsworth J.A."/>
            <person name="Gillett W."/>
            <person name="Graham D.E."/>
            <person name="Hackett M."/>
            <person name="Haydock A.K."/>
            <person name="Kang A."/>
            <person name="Land M.L."/>
            <person name="Levy R."/>
            <person name="Lie T.J."/>
            <person name="Major T.A."/>
            <person name="Moore B.C."/>
            <person name="Porat I."/>
            <person name="Palmeiri A."/>
            <person name="Rouse G."/>
            <person name="Saenphimmachak C."/>
            <person name="Soell D."/>
            <person name="Van Dien S."/>
            <person name="Wang T."/>
            <person name="Whitman W.B."/>
            <person name="Xia Q."/>
            <person name="Zhang Y."/>
            <person name="Larimer F.W."/>
            <person name="Olson M.V."/>
            <person name="Leigh J.A."/>
        </authorList>
    </citation>
    <scope>NUCLEOTIDE SEQUENCE [LARGE SCALE GENOMIC DNA]</scope>
    <source>
        <strain>DSM 14266 / JCM 13030 / NBRC 101832 / S2 / LL</strain>
    </source>
</reference>
<reference key="2">
    <citation type="journal article" date="2008" name="FEBS Lett.">
        <title>Methanogens with pseudomurein use diaminopimelate aminotransferase in lysine biosynthesis.</title>
        <authorList>
            <person name="Graham D.E."/>
            <person name="Huse H.K."/>
        </authorList>
    </citation>
    <scope>LACK OF FUNCTION AS A DIAMINOPIMELATE AMINOTRANSFERASE</scope>
</reference>
<reference key="3">
    <citation type="journal article" date="2010" name="J. Bacteriol.">
        <title>Methanococci use the diaminopimelate aminotransferase (DapL) pathway for lysine biosynthesis.</title>
        <authorList>
            <person name="Liu Y."/>
            <person name="White R.H."/>
            <person name="Whitman W.B."/>
        </authorList>
    </citation>
    <scope>FUNCTION IN LYSINE BIOSYNTHESIS AND AS A DIAMINOPIMELATE AMINOTRANSFERASE</scope>
    <scope>DISRUPTION PHENOTYPE</scope>
    <source>
        <strain>DSM 14266 / JCM 13030 / NBRC 101832 / S2 / LL</strain>
    </source>
</reference>
<comment type="function">
    <text evidence="3">Involved in the synthesis of meso-diaminopimelate (m-DAP or DL-DAP), required for both lysine and peptidoglycan biosynthesis. Catalyzes the direct conversion of tetrahydrodipicolinate to LL-diaminopimelate.</text>
</comment>
<comment type="catalytic activity">
    <reaction evidence="2">
        <text>(2S,6S)-2,6-diaminopimelate + 2-oxoglutarate = (S)-2,3,4,5-tetrahydrodipicolinate + L-glutamate + H2O + H(+)</text>
        <dbReference type="Rhea" id="RHEA:23988"/>
        <dbReference type="ChEBI" id="CHEBI:15377"/>
        <dbReference type="ChEBI" id="CHEBI:15378"/>
        <dbReference type="ChEBI" id="CHEBI:16810"/>
        <dbReference type="ChEBI" id="CHEBI:16845"/>
        <dbReference type="ChEBI" id="CHEBI:29985"/>
        <dbReference type="ChEBI" id="CHEBI:57609"/>
        <dbReference type="EC" id="2.6.1.83"/>
    </reaction>
</comment>
<comment type="cofactor">
    <cofactor evidence="2">
        <name>pyridoxal 5'-phosphate</name>
        <dbReference type="ChEBI" id="CHEBI:597326"/>
    </cofactor>
</comment>
<comment type="pathway">
    <text evidence="5">Amino-acid biosynthesis; L-lysine biosynthesis via DAP pathway; LL-2,6-diaminopimelate from (S)-tetrahydrodipicolinate (aminotransferase route): step 1/1.</text>
</comment>
<comment type="subunit">
    <text evidence="1">Homodimer.</text>
</comment>
<comment type="subcellular location">
    <subcellularLocation>
        <location evidence="5">Cytoplasm</location>
    </subcellularLocation>
</comment>
<comment type="disruption phenotype">
    <text evidence="3">Cells lacking this gene are unable to grow in the absence of exogenous L-lysine.</text>
</comment>
<comment type="similarity">
    <text evidence="5">Belongs to the class-I pyridoxal-phosphate-dependent aminotransferase family.</text>
</comment>
<keyword id="KW-0032">Aminotransferase</keyword>
<keyword id="KW-0963">Cytoplasm</keyword>
<keyword id="KW-0663">Pyridoxal phosphate</keyword>
<keyword id="KW-1185">Reference proteome</keyword>
<keyword id="KW-0808">Transferase</keyword>
<protein>
    <recommendedName>
        <fullName evidence="4">LL-diaminopimelate aminotransferase</fullName>
        <shortName evidence="4">DAP-AT</shortName>
        <shortName evidence="4">DAP-aminotransferase</shortName>
        <shortName evidence="4">LL-DAP-aminotransferase</shortName>
        <ecNumber evidence="2">2.6.1.83</ecNumber>
    </recommendedName>
</protein>
<accession>Q6LX26</accession>
<sequence length="416" mass="46764">MESYIQNLFAERIGGKSFGKEDVIYKFEKIKRAKQAAKLKYPDMELIDMGVGEPDEMADESVVEVLCEEAKKHVNRGYSDNGVQALKDEIPIYLEKIFGVKDLDPVNEVVHSIGSKPALAYITSVFINPGDVTLMTVPGYPVTATHTKWYGGSVETLPLLEKNNFLPELDAISKEVRENAKILYLNYPNNPTGAQATKKFYKEAVDFAFENDLIVIQDAAYAALTYGDKPLSFLSVKDAKEVGVEIHSFSKAYNMTGWRLAFVAGNELIVRGFAAVKDNYDSGQFIPIQKAGIHCLRHPEITEKTRAKYERRLSKMVKILKEAGFNAKMPGGTFYLYVKAPIGTKDGAKFANAEEFSQFMIKEKLISTVPWDDAGNFVRMAACFEAFKDGEISIEEEDRILNEVKRRLTEVEFVFE</sequence>
<organism>
    <name type="scientific">Methanococcus maripaludis (strain DSM 14266 / JCM 13030 / NBRC 101832 / S2 / LL)</name>
    <dbReference type="NCBI Taxonomy" id="267377"/>
    <lineage>
        <taxon>Archaea</taxon>
        <taxon>Methanobacteriati</taxon>
        <taxon>Methanobacteriota</taxon>
        <taxon>Methanomada group</taxon>
        <taxon>Methanococci</taxon>
        <taxon>Methanococcales</taxon>
        <taxon>Methanococcaceae</taxon>
        <taxon>Methanococcus</taxon>
    </lineage>
</organism>
<name>DAPAT_METMP</name>
<evidence type="ECO:0000250" key="1">
    <source>
        <dbReference type="UniProtKB" id="O84395"/>
    </source>
</evidence>
<evidence type="ECO:0000250" key="2">
    <source>
        <dbReference type="UniProtKB" id="Q58786"/>
    </source>
</evidence>
<evidence type="ECO:0000269" key="3">
    <source>
    </source>
</evidence>
<evidence type="ECO:0000303" key="4">
    <source>
    </source>
</evidence>
<evidence type="ECO:0000305" key="5"/>
<gene>
    <name type="primary">dapL</name>
    <name type="ordered locus">MMP1527</name>
</gene>